<keyword id="KW-1003">Cell membrane</keyword>
<keyword id="KW-0472">Membrane</keyword>
<keyword id="KW-1185">Reference proteome</keyword>
<keyword id="KW-0812">Transmembrane</keyword>
<keyword id="KW-1133">Transmembrane helix</keyword>
<accession>Q832R4</accession>
<proteinExistence type="inferred from homology"/>
<dbReference type="EMBL" id="AE016830">
    <property type="protein sequence ID" value="AAO81887.1"/>
    <property type="molecule type" value="Genomic_DNA"/>
</dbReference>
<dbReference type="RefSeq" id="NP_815817.1">
    <property type="nucleotide sequence ID" value="NC_004668.1"/>
</dbReference>
<dbReference type="RefSeq" id="WP_002356937.1">
    <property type="nucleotide sequence ID" value="NZ_KE136528.1"/>
</dbReference>
<dbReference type="SMR" id="Q832R4"/>
<dbReference type="STRING" id="226185.EF_2154"/>
<dbReference type="EnsemblBacteria" id="AAO81887">
    <property type="protein sequence ID" value="AAO81887"/>
    <property type="gene ID" value="EF_2154"/>
</dbReference>
<dbReference type="KEGG" id="efa:EF2154"/>
<dbReference type="PATRIC" id="fig|226185.45.peg.1374"/>
<dbReference type="eggNOG" id="COG4720">
    <property type="taxonomic scope" value="Bacteria"/>
</dbReference>
<dbReference type="HOGENOM" id="CLU_120023_0_0_9"/>
<dbReference type="Proteomes" id="UP000001415">
    <property type="component" value="Chromosome"/>
</dbReference>
<dbReference type="GO" id="GO:0005886">
    <property type="term" value="C:plasma membrane"/>
    <property type="evidence" value="ECO:0007669"/>
    <property type="project" value="UniProtKB-SubCell"/>
</dbReference>
<dbReference type="Gene3D" id="1.10.1760.20">
    <property type="match status" value="1"/>
</dbReference>
<dbReference type="HAMAP" id="MF_01572">
    <property type="entry name" value="UPF0397"/>
    <property type="match status" value="1"/>
</dbReference>
<dbReference type="InterPro" id="IPR009825">
    <property type="entry name" value="ECF_substrate-spec-like"/>
</dbReference>
<dbReference type="InterPro" id="IPR022914">
    <property type="entry name" value="UPF0397"/>
</dbReference>
<dbReference type="NCBIfam" id="NF010182">
    <property type="entry name" value="PRK13661.1"/>
    <property type="match status" value="1"/>
</dbReference>
<dbReference type="PANTHER" id="PTHR37815">
    <property type="entry name" value="UPF0397 PROTEIN BC_2624-RELATED"/>
    <property type="match status" value="1"/>
</dbReference>
<dbReference type="PANTHER" id="PTHR37815:SF3">
    <property type="entry name" value="UPF0397 PROTEIN SPR0429"/>
    <property type="match status" value="1"/>
</dbReference>
<dbReference type="Pfam" id="PF07155">
    <property type="entry name" value="ECF-ribofla_trS"/>
    <property type="match status" value="1"/>
</dbReference>
<name>Y2154_ENTFA</name>
<protein>
    <recommendedName>
        <fullName evidence="1">UPF0397 protein EF_2154</fullName>
    </recommendedName>
</protein>
<organism>
    <name type="scientific">Enterococcus faecalis (strain ATCC 700802 / V583)</name>
    <dbReference type="NCBI Taxonomy" id="226185"/>
    <lineage>
        <taxon>Bacteria</taxon>
        <taxon>Bacillati</taxon>
        <taxon>Bacillota</taxon>
        <taxon>Bacilli</taxon>
        <taxon>Lactobacillales</taxon>
        <taxon>Enterococcaceae</taxon>
        <taxon>Enterococcus</taxon>
    </lineage>
</organism>
<comment type="subcellular location">
    <subcellularLocation>
        <location evidence="1">Cell membrane</location>
        <topology evidence="1">Multi-pass membrane protein</topology>
    </subcellularLocation>
</comment>
<comment type="similarity">
    <text evidence="1">Belongs to the UPF0397 family.</text>
</comment>
<sequence>MKEKMSVKTIVAIGIGSAVFVILGRFVVIPTGIPNTNLETSYPFLALMSVVFGPVAGGLIGLIGHTLKDFTTYGSAWWSWIICSGIIGIIFGFAGRKMDLQHGEFTTNDMVRFNIFQAFGNIVVWGLIAPSLDILIYSEPASKVFTQGVFATVSNIVAVGIIGTLLMKAYASTRTKKGSLSKD</sequence>
<reference key="1">
    <citation type="journal article" date="2003" name="Science">
        <title>Role of mobile DNA in the evolution of vancomycin-resistant Enterococcus faecalis.</title>
        <authorList>
            <person name="Paulsen I.T."/>
            <person name="Banerjei L."/>
            <person name="Myers G.S.A."/>
            <person name="Nelson K.E."/>
            <person name="Seshadri R."/>
            <person name="Read T.D."/>
            <person name="Fouts D.E."/>
            <person name="Eisen J.A."/>
            <person name="Gill S.R."/>
            <person name="Heidelberg J.F."/>
            <person name="Tettelin H."/>
            <person name="Dodson R.J."/>
            <person name="Umayam L.A."/>
            <person name="Brinkac L.M."/>
            <person name="Beanan M.J."/>
            <person name="Daugherty S.C."/>
            <person name="DeBoy R.T."/>
            <person name="Durkin S.A."/>
            <person name="Kolonay J.F."/>
            <person name="Madupu R."/>
            <person name="Nelson W.C."/>
            <person name="Vamathevan J.J."/>
            <person name="Tran B."/>
            <person name="Upton J."/>
            <person name="Hansen T."/>
            <person name="Shetty J."/>
            <person name="Khouri H.M."/>
            <person name="Utterback T.R."/>
            <person name="Radune D."/>
            <person name="Ketchum K.A."/>
            <person name="Dougherty B.A."/>
            <person name="Fraser C.M."/>
        </authorList>
    </citation>
    <scope>NUCLEOTIDE SEQUENCE [LARGE SCALE GENOMIC DNA]</scope>
    <source>
        <strain>ATCC 700802 / V583</strain>
    </source>
</reference>
<feature type="chain" id="PRO_0000260792" description="UPF0397 protein EF_2154">
    <location>
        <begin position="1"/>
        <end position="183"/>
    </location>
</feature>
<feature type="transmembrane region" description="Helical" evidence="1">
    <location>
        <begin position="10"/>
        <end position="30"/>
    </location>
</feature>
<feature type="transmembrane region" description="Helical" evidence="1">
    <location>
        <begin position="44"/>
        <end position="64"/>
    </location>
</feature>
<feature type="transmembrane region" description="Helical" evidence="1">
    <location>
        <begin position="74"/>
        <end position="94"/>
    </location>
</feature>
<feature type="transmembrane region" description="Helical" evidence="1">
    <location>
        <begin position="115"/>
        <end position="135"/>
    </location>
</feature>
<feature type="transmembrane region" description="Helical" evidence="1">
    <location>
        <begin position="147"/>
        <end position="167"/>
    </location>
</feature>
<evidence type="ECO:0000255" key="1">
    <source>
        <dbReference type="HAMAP-Rule" id="MF_01572"/>
    </source>
</evidence>
<gene>
    <name type="ordered locus">EF_2154</name>
</gene>